<sequence>MLSHLRPALVSMGLFTVLLGLAYPLAVTGVAQAAFPNQANGSLIRDADGKVVGSALIGQVFAKPEYFHGRPSAAGAGYDASASSGSNMGPLNETLIARLKTDAAALRAENPGVAIPADAVTTSGSGLDPDISPANARFQAPRVAGARGVPEKDVTALIDAQVQQPLLGFIGQPRVNVLALNRALDARYPPLASQKDG</sequence>
<keyword id="KW-0067">ATP-binding</keyword>
<keyword id="KW-0997">Cell inner membrane</keyword>
<keyword id="KW-1003">Cell membrane</keyword>
<keyword id="KW-0406">Ion transport</keyword>
<keyword id="KW-0472">Membrane</keyword>
<keyword id="KW-0547">Nucleotide-binding</keyword>
<keyword id="KW-0630">Potassium</keyword>
<keyword id="KW-0633">Potassium transport</keyword>
<keyword id="KW-1185">Reference proteome</keyword>
<keyword id="KW-0812">Transmembrane</keyword>
<keyword id="KW-1133">Transmembrane helix</keyword>
<keyword id="KW-0813">Transport</keyword>
<evidence type="ECO:0000255" key="1">
    <source>
        <dbReference type="HAMAP-Rule" id="MF_00276"/>
    </source>
</evidence>
<accession>Q9A7X6</accession>
<dbReference type="EMBL" id="AE005673">
    <property type="protein sequence ID" value="AAK23572.1"/>
    <property type="molecule type" value="Genomic_DNA"/>
</dbReference>
<dbReference type="PIR" id="H87446">
    <property type="entry name" value="H87446"/>
</dbReference>
<dbReference type="RefSeq" id="NP_420404.1">
    <property type="nucleotide sequence ID" value="NC_002696.2"/>
</dbReference>
<dbReference type="RefSeq" id="WP_010919467.1">
    <property type="nucleotide sequence ID" value="NC_002696.2"/>
</dbReference>
<dbReference type="SMR" id="Q9A7X6"/>
<dbReference type="STRING" id="190650.CC_1593"/>
<dbReference type="EnsemblBacteria" id="AAK23572">
    <property type="protein sequence ID" value="AAK23572"/>
    <property type="gene ID" value="CC_1593"/>
</dbReference>
<dbReference type="KEGG" id="ccr:CC_1593"/>
<dbReference type="PATRIC" id="fig|190650.5.peg.1620"/>
<dbReference type="eggNOG" id="COG2156">
    <property type="taxonomic scope" value="Bacteria"/>
</dbReference>
<dbReference type="HOGENOM" id="CLU_077094_2_0_5"/>
<dbReference type="BioCyc" id="CAULO:CC1593-MONOMER"/>
<dbReference type="Proteomes" id="UP000001816">
    <property type="component" value="Chromosome"/>
</dbReference>
<dbReference type="GO" id="GO:0005886">
    <property type="term" value="C:plasma membrane"/>
    <property type="evidence" value="ECO:0007669"/>
    <property type="project" value="UniProtKB-SubCell"/>
</dbReference>
<dbReference type="GO" id="GO:0005524">
    <property type="term" value="F:ATP binding"/>
    <property type="evidence" value="ECO:0007669"/>
    <property type="project" value="UniProtKB-UniRule"/>
</dbReference>
<dbReference type="GO" id="GO:0008556">
    <property type="term" value="F:P-type potassium transmembrane transporter activity"/>
    <property type="evidence" value="ECO:0007669"/>
    <property type="project" value="InterPro"/>
</dbReference>
<dbReference type="HAMAP" id="MF_00276">
    <property type="entry name" value="KdpC"/>
    <property type="match status" value="1"/>
</dbReference>
<dbReference type="InterPro" id="IPR003820">
    <property type="entry name" value="KdpC"/>
</dbReference>
<dbReference type="NCBIfam" id="TIGR00681">
    <property type="entry name" value="kdpC"/>
    <property type="match status" value="1"/>
</dbReference>
<dbReference type="NCBIfam" id="NF001454">
    <property type="entry name" value="PRK00315.1"/>
    <property type="match status" value="1"/>
</dbReference>
<dbReference type="PANTHER" id="PTHR30042">
    <property type="entry name" value="POTASSIUM-TRANSPORTING ATPASE C CHAIN"/>
    <property type="match status" value="1"/>
</dbReference>
<dbReference type="PANTHER" id="PTHR30042:SF2">
    <property type="entry name" value="POTASSIUM-TRANSPORTING ATPASE KDPC SUBUNIT"/>
    <property type="match status" value="1"/>
</dbReference>
<dbReference type="Pfam" id="PF02669">
    <property type="entry name" value="KdpC"/>
    <property type="match status" value="1"/>
</dbReference>
<dbReference type="PIRSF" id="PIRSF001296">
    <property type="entry name" value="K_ATPase_KdpC"/>
    <property type="match status" value="1"/>
</dbReference>
<gene>
    <name evidence="1" type="primary">kdpC</name>
    <name type="ordered locus">CC_1593</name>
</gene>
<name>KDPC_CAUVC</name>
<reference key="1">
    <citation type="journal article" date="2001" name="Proc. Natl. Acad. Sci. U.S.A.">
        <title>Complete genome sequence of Caulobacter crescentus.</title>
        <authorList>
            <person name="Nierman W.C."/>
            <person name="Feldblyum T.V."/>
            <person name="Laub M.T."/>
            <person name="Paulsen I.T."/>
            <person name="Nelson K.E."/>
            <person name="Eisen J.A."/>
            <person name="Heidelberg J.F."/>
            <person name="Alley M.R.K."/>
            <person name="Ohta N."/>
            <person name="Maddock J.R."/>
            <person name="Potocka I."/>
            <person name="Nelson W.C."/>
            <person name="Newton A."/>
            <person name="Stephens C."/>
            <person name="Phadke N.D."/>
            <person name="Ely B."/>
            <person name="DeBoy R.T."/>
            <person name="Dodson R.J."/>
            <person name="Durkin A.S."/>
            <person name="Gwinn M.L."/>
            <person name="Haft D.H."/>
            <person name="Kolonay J.F."/>
            <person name="Smit J."/>
            <person name="Craven M.B."/>
            <person name="Khouri H.M."/>
            <person name="Shetty J."/>
            <person name="Berry K.J."/>
            <person name="Utterback T.R."/>
            <person name="Tran K."/>
            <person name="Wolf A.M."/>
            <person name="Vamathevan J.J."/>
            <person name="Ermolaeva M.D."/>
            <person name="White O."/>
            <person name="Salzberg S.L."/>
            <person name="Venter J.C."/>
            <person name="Shapiro L."/>
            <person name="Fraser C.M."/>
        </authorList>
    </citation>
    <scope>NUCLEOTIDE SEQUENCE [LARGE SCALE GENOMIC DNA]</scope>
    <source>
        <strain>ATCC 19089 / CIP 103742 / CB 15</strain>
    </source>
</reference>
<protein>
    <recommendedName>
        <fullName evidence="1">Potassium-transporting ATPase KdpC subunit</fullName>
    </recommendedName>
    <alternativeName>
        <fullName evidence="1">ATP phosphohydrolase [potassium-transporting] C chain</fullName>
    </alternativeName>
    <alternativeName>
        <fullName evidence="1">Potassium-binding and translocating subunit C</fullName>
    </alternativeName>
    <alternativeName>
        <fullName evidence="1">Potassium-translocating ATPase C chain</fullName>
    </alternativeName>
</protein>
<proteinExistence type="inferred from homology"/>
<feature type="chain" id="PRO_0000196987" description="Potassium-transporting ATPase KdpC subunit">
    <location>
        <begin position="1"/>
        <end position="197"/>
    </location>
</feature>
<feature type="transmembrane region" description="Helical" evidence="1">
    <location>
        <begin position="7"/>
        <end position="27"/>
    </location>
</feature>
<organism>
    <name type="scientific">Caulobacter vibrioides (strain ATCC 19089 / CIP 103742 / CB 15)</name>
    <name type="common">Caulobacter crescentus</name>
    <dbReference type="NCBI Taxonomy" id="190650"/>
    <lineage>
        <taxon>Bacteria</taxon>
        <taxon>Pseudomonadati</taxon>
        <taxon>Pseudomonadota</taxon>
        <taxon>Alphaproteobacteria</taxon>
        <taxon>Caulobacterales</taxon>
        <taxon>Caulobacteraceae</taxon>
        <taxon>Caulobacter</taxon>
    </lineage>
</organism>
<comment type="function">
    <text evidence="1">Part of the high-affinity ATP-driven potassium transport (or Kdp) system, which catalyzes the hydrolysis of ATP coupled with the electrogenic transport of potassium into the cytoplasm. This subunit acts as a catalytic chaperone that increases the ATP-binding affinity of the ATP-hydrolyzing subunit KdpB by the formation of a transient KdpB/KdpC/ATP ternary complex.</text>
</comment>
<comment type="subunit">
    <text evidence="1">The system is composed of three essential subunits: KdpA, KdpB and KdpC.</text>
</comment>
<comment type="subcellular location">
    <subcellularLocation>
        <location evidence="1">Cell inner membrane</location>
        <topology evidence="1">Single-pass membrane protein</topology>
    </subcellularLocation>
</comment>
<comment type="similarity">
    <text evidence="1">Belongs to the KdpC family.</text>
</comment>